<evidence type="ECO:0000250" key="1"/>
<evidence type="ECO:0000250" key="2">
    <source>
        <dbReference type="UniProtKB" id="P84345"/>
    </source>
</evidence>
<evidence type="ECO:0000255" key="3"/>
<evidence type="ECO:0000305" key="4"/>
<evidence type="ECO:0000312" key="5">
    <source>
        <dbReference type="EMBL" id="ABY51626.1"/>
    </source>
</evidence>
<geneLocation type="mitochondrion" evidence="5"/>
<organism>
    <name type="scientific">Aedes aegypti</name>
    <name type="common">Yellowfever mosquito</name>
    <name type="synonym">Culex aegypti</name>
    <dbReference type="NCBI Taxonomy" id="7159"/>
    <lineage>
        <taxon>Eukaryota</taxon>
        <taxon>Metazoa</taxon>
        <taxon>Ecdysozoa</taxon>
        <taxon>Arthropoda</taxon>
        <taxon>Hexapoda</taxon>
        <taxon>Insecta</taxon>
        <taxon>Pterygota</taxon>
        <taxon>Neoptera</taxon>
        <taxon>Endopterygota</taxon>
        <taxon>Diptera</taxon>
        <taxon>Nematocera</taxon>
        <taxon>Culicoidea</taxon>
        <taxon>Culicidae</taxon>
        <taxon>Culicinae</taxon>
        <taxon>Aedini</taxon>
        <taxon>Aedes</taxon>
        <taxon>Stegomyia</taxon>
    </lineage>
</organism>
<keyword id="KW-0138">CF(0)</keyword>
<keyword id="KW-0375">Hydrogen ion transport</keyword>
<keyword id="KW-0406">Ion transport</keyword>
<keyword id="KW-0472">Membrane</keyword>
<keyword id="KW-0496">Mitochondrion</keyword>
<keyword id="KW-1185">Reference proteome</keyword>
<keyword id="KW-0812">Transmembrane</keyword>
<keyword id="KW-1133">Transmembrane helix</keyword>
<keyword id="KW-0813">Transport</keyword>
<protein>
    <recommendedName>
        <fullName>ATP synthase protein 8</fullName>
        <shortName>ATPase subunit 8</shortName>
    </recommendedName>
    <alternativeName>
        <fullName>A6L</fullName>
    </alternativeName>
</protein>
<comment type="function">
    <text evidence="1 4">Mitochondrial membrane ATP synthase (F(1)F(O) ATP synthase or Complex V) produces ATP from ADP in the presence of a proton gradient across the membrane which is generated by electron transport complexes of the respiratory chain. F-type ATPases consist of two structural domains, F(1) - containing the extramembraneous catalytic core and F(0) - containing the membrane proton channel, linked together by a central stalk and a peripheral stalk. During catalysis, ATP synthesis in the catalytic domain of F(1) is coupled via a rotary mechanism of the central stalk subunits to proton translocation. Part of the complex F(0) domain. Minor subunit located with subunit a in the membrane (By similarity).</text>
</comment>
<comment type="subunit">
    <text evidence="1 4">F-type ATPases have 2 components, CF(1) - the catalytic core - and CF(0) - the membrane proton channel.</text>
</comment>
<comment type="subcellular location">
    <subcellularLocation>
        <location evidence="3">Mitochondrion membrane</location>
        <topology evidence="3">Single-pass membrane protein</topology>
    </subcellularLocation>
</comment>
<comment type="similarity">
    <text evidence="3">Belongs to the ATPase protein 8 family.</text>
</comment>
<gene>
    <name evidence="2" type="primary">mt:ATPase8</name>
    <name evidence="5" type="synonym">ATP8</name>
</gene>
<dbReference type="EMBL" id="EU352212">
    <property type="protein sequence ID" value="ABY51626.1"/>
    <property type="molecule type" value="Genomic_DNA"/>
</dbReference>
<dbReference type="RefSeq" id="YP_001649165.1">
    <property type="nucleotide sequence ID" value="NC_010241.1"/>
</dbReference>
<dbReference type="SMR" id="B0FWC9"/>
<dbReference type="FunCoup" id="B0FWC9">
    <property type="interactions" value="125"/>
</dbReference>
<dbReference type="STRING" id="7159.B0FWC9"/>
<dbReference type="PaxDb" id="7159-AAEL018667-PA"/>
<dbReference type="VEuPathDB" id="VectorBase:AAEL018667"/>
<dbReference type="eggNOG" id="ENOG502T7W7">
    <property type="taxonomic scope" value="Eukaryota"/>
</dbReference>
<dbReference type="HOGENOM" id="CLU_3070490_0_0_1"/>
<dbReference type="InParanoid" id="B0FWC9"/>
<dbReference type="OrthoDB" id="7721627at2759"/>
<dbReference type="Proteomes" id="UP000008820">
    <property type="component" value="Mitochondrion MT"/>
</dbReference>
<dbReference type="Proteomes" id="UP000008820">
    <property type="component" value="Unassembled WGS sequence"/>
</dbReference>
<dbReference type="Proteomes" id="UP000682892">
    <property type="component" value="Mitochondrion MT"/>
</dbReference>
<dbReference type="GO" id="GO:0031966">
    <property type="term" value="C:mitochondrial membrane"/>
    <property type="evidence" value="ECO:0007669"/>
    <property type="project" value="UniProtKB-SubCell"/>
</dbReference>
<dbReference type="GO" id="GO:0045259">
    <property type="term" value="C:proton-transporting ATP synthase complex"/>
    <property type="evidence" value="ECO:0007669"/>
    <property type="project" value="UniProtKB-KW"/>
</dbReference>
<dbReference type="GO" id="GO:0015078">
    <property type="term" value="F:proton transmembrane transporter activity"/>
    <property type="evidence" value="ECO:0007669"/>
    <property type="project" value="InterPro"/>
</dbReference>
<dbReference type="GO" id="GO:0015986">
    <property type="term" value="P:proton motive force-driven ATP synthesis"/>
    <property type="evidence" value="ECO:0007669"/>
    <property type="project" value="InterPro"/>
</dbReference>
<dbReference type="InterPro" id="IPR001421">
    <property type="entry name" value="ATP8_metazoa"/>
</dbReference>
<dbReference type="Pfam" id="PF00895">
    <property type="entry name" value="ATP-synt_8"/>
    <property type="match status" value="1"/>
</dbReference>
<accession>B0FWC9</accession>
<feature type="chain" id="PRO_0000372803" description="ATP synthase protein 8">
    <location>
        <begin position="1"/>
        <end position="53"/>
    </location>
</feature>
<feature type="transmembrane region" description="Helical" evidence="3">
    <location>
        <begin position="5"/>
        <end position="25"/>
    </location>
</feature>
<sequence length="53" mass="6435">MPQMAPISWLTLFFVFSITLVIFNIKNYFCFSYNSTETSQNLNIKQHKLNWKW</sequence>
<proteinExistence type="inferred from homology"/>
<name>ATP8_AEDAE</name>
<reference evidence="5" key="1">
    <citation type="submission" date="2007-12" db="EMBL/GenBank/DDBJ databases">
        <title>The mitochondrial genome of the Yellow fever mosquito - Aedes aegypti.</title>
        <authorList>
            <person name="Lobo N.F."/>
            <person name="Lovin D."/>
            <person name="DeBruyn B."/>
            <person name="Puiu D."/>
            <person name="Shumway M."/>
            <person name="Haas B."/>
            <person name="Nene V."/>
            <person name="Severson D.W."/>
        </authorList>
    </citation>
    <scope>NUCLEOTIDE SEQUENCE [LARGE SCALE GENOMIC DNA]</scope>
    <source>
        <strain evidence="5">LVPib12</strain>
    </source>
</reference>